<dbReference type="PIR" id="A34816">
    <property type="entry name" value="A34816"/>
</dbReference>
<dbReference type="SMR" id="P16242"/>
<dbReference type="MEROPS" id="I15.009"/>
<dbReference type="GO" id="GO:0005576">
    <property type="term" value="C:extracellular region"/>
    <property type="evidence" value="ECO:0007669"/>
    <property type="project" value="UniProtKB-SubCell"/>
</dbReference>
<dbReference type="GO" id="GO:0008201">
    <property type="term" value="F:heparin binding"/>
    <property type="evidence" value="ECO:0007669"/>
    <property type="project" value="UniProtKB-KW"/>
</dbReference>
<dbReference type="GO" id="GO:0004867">
    <property type="term" value="F:serine-type endopeptidase inhibitor activity"/>
    <property type="evidence" value="ECO:0007669"/>
    <property type="project" value="UniProtKB-KW"/>
</dbReference>
<dbReference type="GO" id="GO:0050819">
    <property type="term" value="P:negative regulation of coagulation"/>
    <property type="evidence" value="ECO:0007669"/>
    <property type="project" value="InterPro"/>
</dbReference>
<dbReference type="Gene3D" id="2.10.22.10">
    <property type="entry name" value="Antistasin, domain 1"/>
    <property type="match status" value="2"/>
</dbReference>
<dbReference type="InterPro" id="IPR004094">
    <property type="entry name" value="Antistasin-like"/>
</dbReference>
<dbReference type="InterPro" id="IPR011061">
    <property type="entry name" value="Hirudin/antistatin"/>
</dbReference>
<dbReference type="InterPro" id="IPR008086">
    <property type="entry name" value="Prot_inh_I15_antistasin_leech"/>
</dbReference>
<dbReference type="Pfam" id="PF02822">
    <property type="entry name" value="Antistasin"/>
    <property type="match status" value="1"/>
</dbReference>
<dbReference type="PRINTS" id="PR01706">
    <property type="entry name" value="ANTISTASIN"/>
</dbReference>
<dbReference type="SUPFAM" id="SSF57262">
    <property type="entry name" value="Leech antihemostatic proteins"/>
    <property type="match status" value="2"/>
</dbReference>
<dbReference type="PROSITE" id="PS51252">
    <property type="entry name" value="ANTISTASIN"/>
    <property type="match status" value="2"/>
</dbReference>
<organism>
    <name type="scientific">Haementeria ghilianii</name>
    <name type="common">Amazon leech</name>
    <dbReference type="NCBI Taxonomy" id="6409"/>
    <lineage>
        <taxon>Eukaryota</taxon>
        <taxon>Metazoa</taxon>
        <taxon>Spiralia</taxon>
        <taxon>Lophotrochozoa</taxon>
        <taxon>Annelida</taxon>
        <taxon>Clitellata</taxon>
        <taxon>Hirudinea</taxon>
        <taxon>Rhynchobdellida</taxon>
        <taxon>Glossiphoniidae</taxon>
        <taxon>Haementeria</taxon>
    </lineage>
</organism>
<protein>
    <recommendedName>
        <fullName>Ghilanten</fullName>
    </recommendedName>
</protein>
<feature type="chain" id="PRO_0000155193" description="Ghilanten">
    <location>
        <begin position="1"/>
        <end position="119"/>
    </location>
</feature>
<feature type="domain" description="Antistasin-like 1" evidence="3">
    <location>
        <begin position="28"/>
        <end position="53"/>
    </location>
</feature>
<feature type="domain" description="Antistasin-like 2" evidence="3">
    <location>
        <begin position="83"/>
        <end position="108"/>
    </location>
</feature>
<feature type="binding site" evidence="2">
    <location>
        <begin position="97"/>
        <end position="100"/>
    </location>
    <ligand>
        <name>heparin</name>
        <dbReference type="ChEBI" id="CHEBI:28304"/>
    </ligand>
</feature>
<feature type="binding site" evidence="2">
    <location>
        <begin position="111"/>
        <end position="118"/>
    </location>
    <ligand>
        <name>heparin</name>
        <dbReference type="ChEBI" id="CHEBI:28304"/>
    </ligand>
</feature>
<feature type="site" description="Reactive bond" evidence="1">
    <location>
        <begin position="34"/>
        <end position="35"/>
    </location>
</feature>
<feature type="site" description="Reactive bond" evidence="1">
    <location>
        <begin position="89"/>
        <end position="90"/>
    </location>
</feature>
<feature type="modified residue" description="Pyrrolidone carboxylic acid" evidence="4">
    <location>
        <position position="1"/>
    </location>
</feature>
<feature type="disulfide bond" evidence="1">
    <location>
        <begin position="8"/>
        <end position="19"/>
    </location>
</feature>
<feature type="disulfide bond" evidence="1">
    <location>
        <begin position="13"/>
        <end position="26"/>
    </location>
</feature>
<feature type="disulfide bond" evidence="1">
    <location>
        <begin position="28"/>
        <end position="48"/>
    </location>
</feature>
<feature type="disulfide bond" evidence="1">
    <location>
        <begin position="33"/>
        <end position="51"/>
    </location>
</feature>
<feature type="disulfide bond" evidence="1">
    <location>
        <begin position="37"/>
        <end position="53"/>
    </location>
</feature>
<feature type="disulfide bond" evidence="1">
    <location>
        <begin position="62"/>
        <end position="73"/>
    </location>
</feature>
<feature type="disulfide bond" evidence="1">
    <location>
        <begin position="67"/>
        <end position="80"/>
    </location>
</feature>
<feature type="disulfide bond" evidence="1">
    <location>
        <begin position="82"/>
        <end position="103"/>
    </location>
</feature>
<feature type="disulfide bond" evidence="1">
    <location>
        <begin position="88"/>
        <end position="106"/>
    </location>
</feature>
<feature type="disulfide bond" evidence="1">
    <location>
        <begin position="92"/>
        <end position="108"/>
    </location>
</feature>
<accession>P16242</accession>
<sequence length="119" mass="13318">QGPFGPGCEEAGCPEGSACNIITDRCTCPEVRCRVYCSHGFQRSRYGCEVCRCRTEPMKATCDISECPEGMMCSRLTNKCDCKIDINCRKTCPNGLKRDKLGCEYCECKPKRKLVPRLS</sequence>
<keyword id="KW-0903">Direct protein sequencing</keyword>
<keyword id="KW-1015">Disulfide bond</keyword>
<keyword id="KW-0358">Heparin-binding</keyword>
<keyword id="KW-0646">Protease inhibitor</keyword>
<keyword id="KW-0873">Pyrrolidone carboxylic acid</keyword>
<keyword id="KW-0677">Repeat</keyword>
<keyword id="KW-0964">Secreted</keyword>
<keyword id="KW-0722">Serine protease inhibitor</keyword>
<evidence type="ECO:0000250" key="1"/>
<evidence type="ECO:0000255" key="2"/>
<evidence type="ECO:0000255" key="3">
    <source>
        <dbReference type="PROSITE-ProRule" id="PRU00582"/>
    </source>
</evidence>
<evidence type="ECO:0000269" key="4">
    <source>
    </source>
</evidence>
<evidence type="ECO:0000305" key="5"/>
<reference key="1">
    <citation type="journal article" date="1990" name="Biochem. Biophys. Res. Commun.">
        <title>Amino acid sequence of ghilanten: anticoagulant-antimetastatic principle of the South American leech, Haementeria ghilianii.</title>
        <authorList>
            <person name="Blankenship D.T."/>
            <person name="Brankamp R.G."/>
            <person name="Manley G.D."/>
            <person name="Cardin A.D."/>
        </authorList>
    </citation>
    <scope>PROTEIN SEQUENCE</scope>
    <scope>PYROGLUTAMATE FORMATION AT GLN-1</scope>
    <source>
        <tissue>Saliva</tissue>
    </source>
</reference>
<comment type="function">
    <text>This highly disulfide-bonded protein is a potent inhibitor of factor Xa. May have therapeutic utility as an anticoagulant. Also exhibits a strong metastatic activity.</text>
</comment>
<comment type="subcellular location">
    <subcellularLocation>
        <location>Secreted</location>
    </subcellularLocation>
</comment>
<comment type="miscellaneous">
    <text>Binds to heparin-agarose, binds to sulfated glycoconjugates.</text>
</comment>
<comment type="similarity">
    <text evidence="5">Belongs to the protease inhibitor I15 (antistasin) family.</text>
</comment>
<proteinExistence type="evidence at protein level"/>
<name>ANTA_HAEGH</name>